<evidence type="ECO:0000250" key="1"/>
<evidence type="ECO:0000255" key="2"/>
<evidence type="ECO:0000256" key="3">
    <source>
        <dbReference type="SAM" id="MobiDB-lite"/>
    </source>
</evidence>
<evidence type="ECO:0000269" key="4">
    <source>
    </source>
</evidence>
<evidence type="ECO:0000305" key="5"/>
<proteinExistence type="evidence at transcript level"/>
<name>PHT18_ORYSJ</name>
<protein>
    <recommendedName>
        <fullName>Probable inorganic phosphate transporter 1-8</fullName>
        <shortName>OsPT8</shortName>
        <shortName>OsPht1;8</shortName>
    </recommendedName>
    <alternativeName>
        <fullName>H(+)/Pi cotransporter</fullName>
    </alternativeName>
</protein>
<sequence>MARQEQQQHLQVLSALDAAKTQWYHFTAIVVAGMGFFTDAYDLFCISLVTKLLGRIYYTDLAKENPGSLPPNVAAAVNGVAFCGTLAGQLFFGWLGDKLGRKSVYGMTLLMMVICSIASGLSFSHTPTSVMATLCFFRFWLGFGIGGDYPLSATIMSEYANKKTRGAFIAAVFAMQGFGILAGGIVTLIISSAFRAGFPAPAYQDDRAGSTVRQADYVWRIILMLGAMPALLTYYWRMKMPETARYTALVAKNAKQAAADMSKVLQVEIQEEQDKLEQMVTRNSSSFGLFSRQFARRHGLHLVGTATTWFLLDIAFYSQNLFQKDIFTSINWIPKAKTMSALEEVFRIARAQTLIALCGTVPGYWFTVFLIDIVGRFAIQLLGFFMMTVFMLGLAVPYHHWTTKGNHIGFVVMYAFTFFFANFGPNSTTFIVPAEIFPARLRSTCHGISAAAGKAGAIIGSFGFLYAAQDPHKPDAGYKPGIGVRNSLFVLAGCNLLGFICTFLVPESKGKSLEEMSGEAEDDDDEVAAAGGGAAVRPQTA</sequence>
<reference key="1">
    <citation type="journal article" date="2002" name="Proc. Natl. Acad. Sci. U.S.A.">
        <title>Rice phosphate transporters include an evolutionarily divergent gene specifically activated in arbuscular mycorrhizal symbiosis.</title>
        <authorList>
            <person name="Paszkowski U."/>
            <person name="Kroken S."/>
            <person name="Roux C."/>
            <person name="Briggs S.P."/>
        </authorList>
    </citation>
    <scope>NUCLEOTIDE SEQUENCE [GENOMIC DNA]</scope>
</reference>
<reference key="2">
    <citation type="journal article" date="2003" name="Science">
        <title>In-depth view of structure, activity, and evolution of rice chromosome 10.</title>
        <authorList>
            <person name="Yu Y."/>
            <person name="Rambo T."/>
            <person name="Currie J."/>
            <person name="Saski C."/>
            <person name="Kim H.-R."/>
            <person name="Collura K."/>
            <person name="Thompson S."/>
            <person name="Simmons J."/>
            <person name="Yang T.-J."/>
            <person name="Nah G."/>
            <person name="Patel A.J."/>
            <person name="Thurmond S."/>
            <person name="Henry D."/>
            <person name="Oates R."/>
            <person name="Palmer M."/>
            <person name="Pries G."/>
            <person name="Gibson J."/>
            <person name="Anderson H."/>
            <person name="Paradkar M."/>
            <person name="Crane L."/>
            <person name="Dale J."/>
            <person name="Carver M.B."/>
            <person name="Wood T."/>
            <person name="Frisch D."/>
            <person name="Engler F."/>
            <person name="Soderlund C."/>
            <person name="Palmer L.E."/>
            <person name="Teytelman L."/>
            <person name="Nascimento L."/>
            <person name="De la Bastide M."/>
            <person name="Spiegel L."/>
            <person name="Ware D."/>
            <person name="O'Shaughnessy A."/>
            <person name="Dike S."/>
            <person name="Dedhia N."/>
            <person name="Preston R."/>
            <person name="Huang E."/>
            <person name="Ferraro K."/>
            <person name="Kuit K."/>
            <person name="Miller B."/>
            <person name="Zutavern T."/>
            <person name="Katzenberger F."/>
            <person name="Muller S."/>
            <person name="Balija V."/>
            <person name="Martienssen R.A."/>
            <person name="Stein L."/>
            <person name="Minx P."/>
            <person name="Johnson D."/>
            <person name="Cordum H."/>
            <person name="Mardis E."/>
            <person name="Cheng Z."/>
            <person name="Jiang J."/>
            <person name="Wilson R."/>
            <person name="McCombie W.R."/>
            <person name="Wing R.A."/>
            <person name="Yuan Q."/>
            <person name="Ouyang S."/>
            <person name="Liu J."/>
            <person name="Jones K.M."/>
            <person name="Gansberger K."/>
            <person name="Moffat K."/>
            <person name="Hill J."/>
            <person name="Tsitrin T."/>
            <person name="Overton L."/>
            <person name="Bera J."/>
            <person name="Kim M."/>
            <person name="Jin S."/>
            <person name="Tallon L."/>
            <person name="Ciecko A."/>
            <person name="Pai G."/>
            <person name="Van Aken S."/>
            <person name="Utterback T."/>
            <person name="Reidmuller S."/>
            <person name="Bormann J."/>
            <person name="Feldblyum T."/>
            <person name="Hsiao J."/>
            <person name="Zismann V."/>
            <person name="Blunt S."/>
            <person name="de Vazeille A.R."/>
            <person name="Shaffer T."/>
            <person name="Koo H."/>
            <person name="Suh B."/>
            <person name="Yang Q."/>
            <person name="Haas B."/>
            <person name="Peterson J."/>
            <person name="Pertea M."/>
            <person name="Volfovsky N."/>
            <person name="Wortman J."/>
            <person name="White O."/>
            <person name="Salzberg S.L."/>
            <person name="Fraser C.M."/>
            <person name="Buell C.R."/>
            <person name="Messing J."/>
            <person name="Song R."/>
            <person name="Fuks G."/>
            <person name="Llaca V."/>
            <person name="Kovchak S."/>
            <person name="Young S."/>
            <person name="Bowers J.E."/>
            <person name="Paterson A.H."/>
            <person name="Johns M.A."/>
            <person name="Mao L."/>
            <person name="Pan H."/>
            <person name="Dean R.A."/>
        </authorList>
    </citation>
    <scope>NUCLEOTIDE SEQUENCE [LARGE SCALE GENOMIC DNA]</scope>
    <source>
        <strain>cv. Nipponbare</strain>
    </source>
</reference>
<reference key="3">
    <citation type="journal article" date="2005" name="Nature">
        <title>The map-based sequence of the rice genome.</title>
        <authorList>
            <consortium name="International rice genome sequencing project (IRGSP)"/>
        </authorList>
    </citation>
    <scope>NUCLEOTIDE SEQUENCE [LARGE SCALE GENOMIC DNA]</scope>
    <source>
        <strain>cv. Nipponbare</strain>
    </source>
</reference>
<reference key="4">
    <citation type="journal article" date="2008" name="Nucleic Acids Res.">
        <title>The rice annotation project database (RAP-DB): 2008 update.</title>
        <authorList>
            <consortium name="The rice annotation project (RAP)"/>
        </authorList>
    </citation>
    <scope>GENOME REANNOTATION</scope>
    <source>
        <strain>cv. Nipponbare</strain>
    </source>
</reference>
<reference key="5">
    <citation type="journal article" date="2013" name="Rice">
        <title>Improvement of the Oryza sativa Nipponbare reference genome using next generation sequence and optical map data.</title>
        <authorList>
            <person name="Kawahara Y."/>
            <person name="de la Bastide M."/>
            <person name="Hamilton J.P."/>
            <person name="Kanamori H."/>
            <person name="McCombie W.R."/>
            <person name="Ouyang S."/>
            <person name="Schwartz D.C."/>
            <person name="Tanaka T."/>
            <person name="Wu J."/>
            <person name="Zhou S."/>
            <person name="Childs K.L."/>
            <person name="Davidson R.M."/>
            <person name="Lin H."/>
            <person name="Quesada-Ocampo L."/>
            <person name="Vaillancourt B."/>
            <person name="Sakai H."/>
            <person name="Lee S.S."/>
            <person name="Kim J."/>
            <person name="Numa H."/>
            <person name="Itoh T."/>
            <person name="Buell C.R."/>
            <person name="Matsumoto T."/>
        </authorList>
    </citation>
    <scope>GENOME REANNOTATION</scope>
    <source>
        <strain>cv. Nipponbare</strain>
    </source>
</reference>
<reference key="6">
    <citation type="journal article" date="2005" name="PLoS Biol.">
        <title>The genomes of Oryza sativa: a history of duplications.</title>
        <authorList>
            <person name="Yu J."/>
            <person name="Wang J."/>
            <person name="Lin W."/>
            <person name="Li S."/>
            <person name="Li H."/>
            <person name="Zhou J."/>
            <person name="Ni P."/>
            <person name="Dong W."/>
            <person name="Hu S."/>
            <person name="Zeng C."/>
            <person name="Zhang J."/>
            <person name="Zhang Y."/>
            <person name="Li R."/>
            <person name="Xu Z."/>
            <person name="Li S."/>
            <person name="Li X."/>
            <person name="Zheng H."/>
            <person name="Cong L."/>
            <person name="Lin L."/>
            <person name="Yin J."/>
            <person name="Geng J."/>
            <person name="Li G."/>
            <person name="Shi J."/>
            <person name="Liu J."/>
            <person name="Lv H."/>
            <person name="Li J."/>
            <person name="Wang J."/>
            <person name="Deng Y."/>
            <person name="Ran L."/>
            <person name="Shi X."/>
            <person name="Wang X."/>
            <person name="Wu Q."/>
            <person name="Li C."/>
            <person name="Ren X."/>
            <person name="Wang J."/>
            <person name="Wang X."/>
            <person name="Li D."/>
            <person name="Liu D."/>
            <person name="Zhang X."/>
            <person name="Ji Z."/>
            <person name="Zhao W."/>
            <person name="Sun Y."/>
            <person name="Zhang Z."/>
            <person name="Bao J."/>
            <person name="Han Y."/>
            <person name="Dong L."/>
            <person name="Ji J."/>
            <person name="Chen P."/>
            <person name="Wu S."/>
            <person name="Liu J."/>
            <person name="Xiao Y."/>
            <person name="Bu D."/>
            <person name="Tan J."/>
            <person name="Yang L."/>
            <person name="Ye C."/>
            <person name="Zhang J."/>
            <person name="Xu J."/>
            <person name="Zhou Y."/>
            <person name="Yu Y."/>
            <person name="Zhang B."/>
            <person name="Zhuang S."/>
            <person name="Wei H."/>
            <person name="Liu B."/>
            <person name="Lei M."/>
            <person name="Yu H."/>
            <person name="Li Y."/>
            <person name="Xu H."/>
            <person name="Wei S."/>
            <person name="He X."/>
            <person name="Fang L."/>
            <person name="Zhang Z."/>
            <person name="Zhang Y."/>
            <person name="Huang X."/>
            <person name="Su Z."/>
            <person name="Tong W."/>
            <person name="Li J."/>
            <person name="Tong Z."/>
            <person name="Li S."/>
            <person name="Ye J."/>
            <person name="Wang L."/>
            <person name="Fang L."/>
            <person name="Lei T."/>
            <person name="Chen C.-S."/>
            <person name="Chen H.-C."/>
            <person name="Xu Z."/>
            <person name="Li H."/>
            <person name="Huang H."/>
            <person name="Zhang F."/>
            <person name="Xu H."/>
            <person name="Li N."/>
            <person name="Zhao C."/>
            <person name="Li S."/>
            <person name="Dong L."/>
            <person name="Huang Y."/>
            <person name="Li L."/>
            <person name="Xi Y."/>
            <person name="Qi Q."/>
            <person name="Li W."/>
            <person name="Zhang B."/>
            <person name="Hu W."/>
            <person name="Zhang Y."/>
            <person name="Tian X."/>
            <person name="Jiao Y."/>
            <person name="Liang X."/>
            <person name="Jin J."/>
            <person name="Gao L."/>
            <person name="Zheng W."/>
            <person name="Hao B."/>
            <person name="Liu S.-M."/>
            <person name="Wang W."/>
            <person name="Yuan L."/>
            <person name="Cao M."/>
            <person name="McDermott J."/>
            <person name="Samudrala R."/>
            <person name="Wang J."/>
            <person name="Wong G.K.-S."/>
            <person name="Yang H."/>
        </authorList>
    </citation>
    <scope>NUCLEOTIDE SEQUENCE [LARGE SCALE GENOMIC DNA]</scope>
    <source>
        <strain>cv. Nipponbare</strain>
    </source>
</reference>
<reference key="7">
    <citation type="journal article" date="2003" name="Science">
        <title>Collection, mapping, and annotation of over 28,000 cDNA clones from japonica rice.</title>
        <authorList>
            <consortium name="The rice full-length cDNA consortium"/>
        </authorList>
    </citation>
    <scope>NUCLEOTIDE SEQUENCE [LARGE SCALE MRNA]</scope>
    <source>
        <strain>cv. Nipponbare</strain>
    </source>
</reference>
<reference key="8">
    <citation type="journal article" date="2008" name="Biotechnol. Lett.">
        <title>Increased expression of OsPT1, a high-affinity phosphate transporter, enhances phosphate acquisition in rice.</title>
        <authorList>
            <person name="Seo H.-M."/>
            <person name="Jung Y."/>
            <person name="Song S."/>
            <person name="Kim Y."/>
            <person name="Kwon T."/>
            <person name="Kim D.-H."/>
            <person name="Jeung S.-J."/>
            <person name="Yi Y.-B."/>
            <person name="Yi G."/>
            <person name="Nam M.-H."/>
            <person name="Nam J."/>
        </authorList>
    </citation>
    <scope>INDUCTION</scope>
</reference>
<accession>Q8H6G8</accession>
<accession>F4MGV4</accession>
<feature type="chain" id="PRO_0000365488" description="Probable inorganic phosphate transporter 1-8">
    <location>
        <begin position="1"/>
        <end position="541"/>
    </location>
</feature>
<feature type="topological domain" description="Cytoplasmic" evidence="2">
    <location>
        <begin position="1"/>
        <end position="28"/>
    </location>
</feature>
<feature type="transmembrane region" description="Helical" evidence="2">
    <location>
        <begin position="29"/>
        <end position="49"/>
    </location>
</feature>
<feature type="topological domain" description="Extracellular" evidence="2">
    <location>
        <begin position="50"/>
        <end position="74"/>
    </location>
</feature>
<feature type="transmembrane region" description="Helical" evidence="2">
    <location>
        <begin position="75"/>
        <end position="95"/>
    </location>
</feature>
<feature type="topological domain" description="Cytoplasmic" evidence="2">
    <location>
        <begin position="96"/>
        <end position="102"/>
    </location>
</feature>
<feature type="transmembrane region" description="Helical" evidence="2">
    <location>
        <begin position="103"/>
        <end position="123"/>
    </location>
</feature>
<feature type="topological domain" description="Extracellular" evidence="2">
    <location>
        <begin position="124"/>
        <end position="126"/>
    </location>
</feature>
<feature type="transmembrane region" description="Helical" evidence="2">
    <location>
        <begin position="127"/>
        <end position="147"/>
    </location>
</feature>
<feature type="topological domain" description="Cytoplasmic" evidence="2">
    <location>
        <begin position="148"/>
        <end position="168"/>
    </location>
</feature>
<feature type="transmembrane region" description="Helical" evidence="2">
    <location>
        <begin position="169"/>
        <end position="189"/>
    </location>
</feature>
<feature type="topological domain" description="Extracellular" evidence="2">
    <location>
        <begin position="190"/>
        <end position="215"/>
    </location>
</feature>
<feature type="transmembrane region" description="Helical" evidence="2">
    <location>
        <begin position="216"/>
        <end position="236"/>
    </location>
</feature>
<feature type="topological domain" description="Cytoplasmic" evidence="2">
    <location>
        <begin position="237"/>
        <end position="297"/>
    </location>
</feature>
<feature type="transmembrane region" description="Helical" evidence="2">
    <location>
        <begin position="298"/>
        <end position="318"/>
    </location>
</feature>
<feature type="topological domain" description="Extracellular" evidence="2">
    <location>
        <begin position="319"/>
        <end position="353"/>
    </location>
</feature>
<feature type="transmembrane region" description="Helical" evidence="2">
    <location>
        <begin position="354"/>
        <end position="374"/>
    </location>
</feature>
<feature type="topological domain" description="Cytoplasmic" evidence="2">
    <location>
        <begin position="375"/>
        <end position="376"/>
    </location>
</feature>
<feature type="transmembrane region" description="Helical" evidence="2">
    <location>
        <begin position="377"/>
        <end position="397"/>
    </location>
</feature>
<feature type="topological domain" description="Extracellular" evidence="2">
    <location>
        <begin position="398"/>
        <end position="404"/>
    </location>
</feature>
<feature type="transmembrane region" description="Helical" evidence="2">
    <location>
        <begin position="405"/>
        <end position="425"/>
    </location>
</feature>
<feature type="topological domain" description="Cytoplasmic" evidence="2">
    <location>
        <begin position="426"/>
        <end position="447"/>
    </location>
</feature>
<feature type="transmembrane region" description="Helical" evidence="2">
    <location>
        <begin position="448"/>
        <end position="468"/>
    </location>
</feature>
<feature type="topological domain" description="Extracellular" evidence="2">
    <location>
        <begin position="469"/>
        <end position="486"/>
    </location>
</feature>
<feature type="transmembrane region" description="Helical" evidence="2">
    <location>
        <begin position="487"/>
        <end position="507"/>
    </location>
</feature>
<feature type="topological domain" description="Cytoplasmic" evidence="2">
    <location>
        <begin position="508"/>
        <end position="541"/>
    </location>
</feature>
<feature type="region of interest" description="Disordered" evidence="3">
    <location>
        <begin position="514"/>
        <end position="541"/>
    </location>
</feature>
<feature type="compositionally biased region" description="Acidic residues" evidence="3">
    <location>
        <begin position="516"/>
        <end position="527"/>
    </location>
</feature>
<feature type="sequence conflict" description="In Ref. 7; AK101170." evidence="5" ref="7">
    <original>A</original>
    <variation>T</variation>
    <location>
        <position position="15"/>
    </location>
</feature>
<dbReference type="EMBL" id="AF536968">
    <property type="protein sequence ID" value="AAN39049.1"/>
    <property type="molecule type" value="Genomic_DNA"/>
</dbReference>
<dbReference type="EMBL" id="DP000086">
    <property type="protein sequence ID" value="AAP53996.1"/>
    <property type="molecule type" value="Genomic_DNA"/>
</dbReference>
<dbReference type="EMBL" id="DP000086">
    <property type="protein sequence ID" value="ABB47712.1"/>
    <property type="molecule type" value="Genomic_DNA"/>
</dbReference>
<dbReference type="EMBL" id="AP008216">
    <property type="protein sequence ID" value="BAF26622.1"/>
    <property type="molecule type" value="Genomic_DNA"/>
</dbReference>
<dbReference type="EMBL" id="AP014966">
    <property type="protein sequence ID" value="BAT11064.1"/>
    <property type="molecule type" value="Genomic_DNA"/>
</dbReference>
<dbReference type="EMBL" id="CM000147">
    <property type="protein sequence ID" value="EAZ16234.1"/>
    <property type="molecule type" value="Genomic_DNA"/>
</dbReference>
<dbReference type="EMBL" id="AK101170">
    <property type="status" value="NOT_ANNOTATED_CDS"/>
    <property type="molecule type" value="mRNA"/>
</dbReference>
<dbReference type="RefSeq" id="XP_015614122.1">
    <property type="nucleotide sequence ID" value="XM_015758636.1"/>
</dbReference>
<dbReference type="SMR" id="Q8H6G8"/>
<dbReference type="FunCoup" id="Q8H6G8">
    <property type="interactions" value="446"/>
</dbReference>
<dbReference type="STRING" id="39947.Q8H6G8"/>
<dbReference type="PaxDb" id="39947-Q8H6G8"/>
<dbReference type="EnsemblPlants" id="Os10t0444700-01">
    <property type="protein sequence ID" value="Os10t0444700-01"/>
    <property type="gene ID" value="Os10g0444700"/>
</dbReference>
<dbReference type="EnsemblPlants" id="Os10t0444700-02">
    <property type="protein sequence ID" value="Os10t0444700-02"/>
    <property type="gene ID" value="Os10g0444700"/>
</dbReference>
<dbReference type="Gramene" id="Os10t0444700-01">
    <property type="protein sequence ID" value="Os10t0444700-01"/>
    <property type="gene ID" value="Os10g0444700"/>
</dbReference>
<dbReference type="Gramene" id="Os10t0444700-02">
    <property type="protein sequence ID" value="Os10t0444700-02"/>
    <property type="gene ID" value="Os10g0444700"/>
</dbReference>
<dbReference type="KEGG" id="dosa:Os10g0444700"/>
<dbReference type="eggNOG" id="KOG0252">
    <property type="taxonomic scope" value="Eukaryota"/>
</dbReference>
<dbReference type="HOGENOM" id="CLU_001265_46_14_1"/>
<dbReference type="InParanoid" id="Q8H6G8"/>
<dbReference type="OMA" id="GLYHVRA"/>
<dbReference type="OrthoDB" id="433512at2759"/>
<dbReference type="PlantReactome" id="R-OSA-9031225">
    <property type="pathway name" value="Response to phosphate deficiency"/>
</dbReference>
<dbReference type="PlantReactome" id="R-OSA-9618218">
    <property type="pathway name" value="Arsenic uptake and detoxification"/>
</dbReference>
<dbReference type="Proteomes" id="UP000000763">
    <property type="component" value="Chromosome 10"/>
</dbReference>
<dbReference type="Proteomes" id="UP000007752">
    <property type="component" value="Chromosome 10"/>
</dbReference>
<dbReference type="Proteomes" id="UP000059680">
    <property type="component" value="Chromosome 10"/>
</dbReference>
<dbReference type="GO" id="GO:0016020">
    <property type="term" value="C:membrane"/>
    <property type="evidence" value="ECO:0007669"/>
    <property type="project" value="UniProtKB-SubCell"/>
</dbReference>
<dbReference type="GO" id="GO:0005315">
    <property type="term" value="F:phosphate transmembrane transporter activity"/>
    <property type="evidence" value="ECO:0007669"/>
    <property type="project" value="InterPro"/>
</dbReference>
<dbReference type="GO" id="GO:0015293">
    <property type="term" value="F:symporter activity"/>
    <property type="evidence" value="ECO:0007669"/>
    <property type="project" value="UniProtKB-KW"/>
</dbReference>
<dbReference type="GO" id="GO:0006817">
    <property type="term" value="P:phosphate ion transport"/>
    <property type="evidence" value="ECO:0007669"/>
    <property type="project" value="UniProtKB-KW"/>
</dbReference>
<dbReference type="CDD" id="cd17364">
    <property type="entry name" value="MFS_PhT"/>
    <property type="match status" value="1"/>
</dbReference>
<dbReference type="FunFam" id="1.20.1250.20:FF:000175">
    <property type="entry name" value="Inorganic phosphate transporter 1-6"/>
    <property type="match status" value="1"/>
</dbReference>
<dbReference type="Gene3D" id="1.20.1250.20">
    <property type="entry name" value="MFS general substrate transporter like domains"/>
    <property type="match status" value="2"/>
</dbReference>
<dbReference type="InterPro" id="IPR020846">
    <property type="entry name" value="MFS_dom"/>
</dbReference>
<dbReference type="InterPro" id="IPR005828">
    <property type="entry name" value="MFS_sugar_transport-like"/>
</dbReference>
<dbReference type="InterPro" id="IPR036259">
    <property type="entry name" value="MFS_trans_sf"/>
</dbReference>
<dbReference type="InterPro" id="IPR004738">
    <property type="entry name" value="Phos_permease"/>
</dbReference>
<dbReference type="NCBIfam" id="TIGR00887">
    <property type="entry name" value="2A0109"/>
    <property type="match status" value="1"/>
</dbReference>
<dbReference type="PANTHER" id="PTHR24064">
    <property type="entry name" value="SOLUTE CARRIER FAMILY 22 MEMBER"/>
    <property type="match status" value="1"/>
</dbReference>
<dbReference type="Pfam" id="PF00083">
    <property type="entry name" value="Sugar_tr"/>
    <property type="match status" value="1"/>
</dbReference>
<dbReference type="SUPFAM" id="SSF103473">
    <property type="entry name" value="MFS general substrate transporter"/>
    <property type="match status" value="1"/>
</dbReference>
<dbReference type="PROSITE" id="PS50850">
    <property type="entry name" value="MFS"/>
    <property type="match status" value="1"/>
</dbReference>
<keyword id="KW-0472">Membrane</keyword>
<keyword id="KW-0592">Phosphate transport</keyword>
<keyword id="KW-1185">Reference proteome</keyword>
<keyword id="KW-0769">Symport</keyword>
<keyword id="KW-0812">Transmembrane</keyword>
<keyword id="KW-1133">Transmembrane helix</keyword>
<keyword id="KW-0813">Transport</keyword>
<organism>
    <name type="scientific">Oryza sativa subsp. japonica</name>
    <name type="common">Rice</name>
    <dbReference type="NCBI Taxonomy" id="39947"/>
    <lineage>
        <taxon>Eukaryota</taxon>
        <taxon>Viridiplantae</taxon>
        <taxon>Streptophyta</taxon>
        <taxon>Embryophyta</taxon>
        <taxon>Tracheophyta</taxon>
        <taxon>Spermatophyta</taxon>
        <taxon>Magnoliopsida</taxon>
        <taxon>Liliopsida</taxon>
        <taxon>Poales</taxon>
        <taxon>Poaceae</taxon>
        <taxon>BOP clade</taxon>
        <taxon>Oryzoideae</taxon>
        <taxon>Oryzeae</taxon>
        <taxon>Oryzinae</taxon>
        <taxon>Oryza</taxon>
        <taxon>Oryza sativa</taxon>
    </lineage>
</organism>
<comment type="function">
    <text evidence="1">High-affinity transporter for external inorganic phosphate.</text>
</comment>
<comment type="subcellular location">
    <subcellularLocation>
        <location evidence="1">Membrane</location>
        <topology evidence="1">Multi-pass membrane protein</topology>
    </subcellularLocation>
</comment>
<comment type="induction">
    <text evidence="4">In roots by phosphate starvation.</text>
</comment>
<comment type="miscellaneous">
    <text>Although related to the sugar transporter family, it does not transport sugars.</text>
</comment>
<comment type="similarity">
    <text evidence="5">Belongs to the major facilitator superfamily. Phosphate:H(+) symporter (TC 2.A.1.9) family.</text>
</comment>
<gene>
    <name type="primary">PHT1-8</name>
    <name type="synonym">PT8</name>
    <name type="ordered locus">Os10g0444700</name>
    <name type="ordered locus">LOC_Os10g30790</name>
    <name type="ORF">OsJ_030443</name>
</gene>